<comment type="catalytic activity">
    <reaction evidence="1">
        <text>(6R)-10-formyltetrahydrofolate + 5-amino-1-(5-phospho-beta-D-ribosyl)imidazole-4-carboxamide = 5-formamido-1-(5-phospho-D-ribosyl)imidazole-4-carboxamide + (6S)-5,6,7,8-tetrahydrofolate</text>
        <dbReference type="Rhea" id="RHEA:22192"/>
        <dbReference type="ChEBI" id="CHEBI:57453"/>
        <dbReference type="ChEBI" id="CHEBI:58467"/>
        <dbReference type="ChEBI" id="CHEBI:58475"/>
        <dbReference type="ChEBI" id="CHEBI:195366"/>
        <dbReference type="EC" id="2.1.2.3"/>
    </reaction>
</comment>
<comment type="catalytic activity">
    <reaction evidence="1">
        <text>IMP + H2O = 5-formamido-1-(5-phospho-D-ribosyl)imidazole-4-carboxamide</text>
        <dbReference type="Rhea" id="RHEA:18445"/>
        <dbReference type="ChEBI" id="CHEBI:15377"/>
        <dbReference type="ChEBI" id="CHEBI:58053"/>
        <dbReference type="ChEBI" id="CHEBI:58467"/>
        <dbReference type="EC" id="3.5.4.10"/>
    </reaction>
</comment>
<comment type="pathway">
    <text evidence="1">Purine metabolism; IMP biosynthesis via de novo pathway; 5-formamido-1-(5-phospho-D-ribosyl)imidazole-4-carboxamide from 5-amino-1-(5-phospho-D-ribosyl)imidazole-4-carboxamide (10-formyl THF route): step 1/1.</text>
</comment>
<comment type="pathway">
    <text evidence="1">Purine metabolism; IMP biosynthesis via de novo pathway; IMP from 5-formamido-1-(5-phospho-D-ribosyl)imidazole-4-carboxamide: step 1/1.</text>
</comment>
<comment type="domain">
    <text evidence="1">The IMP cyclohydrolase activity resides in the N-terminal region.</text>
</comment>
<comment type="similarity">
    <text evidence="1 3">Belongs to the PurH family.</text>
</comment>
<keyword id="KW-0378">Hydrolase</keyword>
<keyword id="KW-0511">Multifunctional enzyme</keyword>
<keyword id="KW-0658">Purine biosynthesis</keyword>
<keyword id="KW-1185">Reference proteome</keyword>
<keyword id="KW-0808">Transferase</keyword>
<accession>P12048</accession>
<feature type="chain" id="PRO_0000192070" description="Bifunctional purine biosynthesis protein PurH">
    <location>
        <begin position="1"/>
        <end position="512"/>
    </location>
</feature>
<feature type="domain" description="MGS-like" evidence="2">
    <location>
        <begin position="1"/>
        <end position="146"/>
    </location>
</feature>
<feature type="sequence conflict" description="In Ref. 1; AAA22683." evidence="3" ref="1">
    <original>L</original>
    <variation>V</variation>
    <location>
        <position position="351"/>
    </location>
</feature>
<organism>
    <name type="scientific">Bacillus subtilis (strain 168)</name>
    <dbReference type="NCBI Taxonomy" id="224308"/>
    <lineage>
        <taxon>Bacteria</taxon>
        <taxon>Bacillati</taxon>
        <taxon>Bacillota</taxon>
        <taxon>Bacilli</taxon>
        <taxon>Bacillales</taxon>
        <taxon>Bacillaceae</taxon>
        <taxon>Bacillus</taxon>
    </lineage>
</organism>
<sequence>MTIKRALISVSDKTNLVPFVKELTELGVEVISTGGTKKLLQENGVDVIGISEVTGFPEIMDGRLKTLHPNIHGGLLAVRGNEEHMAQINEHGIQPIDLVVVNLYPFKETISKEDVTYEEAIENIDIGGPGMLRAASKNHQDVTVIVDPADYSPVLNQIKEEGSVSLQKKRELAAKVFRHTAAYDALIADYLTNVVGEKEPEQFTVTFEKKQSLRYGENPHQEATFYQTALPVKGSIAQAEQLHGKELSYNNIKDADAAVQIVREFTEPAAVAVKHMNPCGVGTGKTIAEAFDRAFEADKTSIFGGIIALNREVDKATAEALHNIFLEIIIAPSFSQEALDVLTAKKNLRLLTLDVSAAVQKEKQLTSVQGGLLIQDLDMHGFDDAEISIPTKREPNEQEWEDLKLAWKVVKHVKSNAIVLAKDNMTVGVGAGQMNRVGSAKIAIEQAGEKAKGSALGSDAYFPMPDTVEEAAKAGVTAIIQPGGSIRDEDSIKKADEYGIAMVFTGIRHFKH</sequence>
<gene>
    <name evidence="1" type="primary">purH</name>
    <name type="synonym">purHJ</name>
    <name type="ordered locus">BSU06520</name>
</gene>
<reference key="1">
    <citation type="journal article" date="1987" name="J. Biol. Chem.">
        <title>Cloning and characterization of a 12-gene cluster from Bacillus subtilis encoding nine enzymes for de novo purine nucleotide synthesis.</title>
        <authorList>
            <person name="Ebbole D.J."/>
            <person name="Zalkin H."/>
        </authorList>
    </citation>
    <scope>NUCLEOTIDE SEQUENCE [GENOMIC DNA]</scope>
</reference>
<reference key="2">
    <citation type="journal article" date="1997" name="Nature">
        <title>The complete genome sequence of the Gram-positive bacterium Bacillus subtilis.</title>
        <authorList>
            <person name="Kunst F."/>
            <person name="Ogasawara N."/>
            <person name="Moszer I."/>
            <person name="Albertini A.M."/>
            <person name="Alloni G."/>
            <person name="Azevedo V."/>
            <person name="Bertero M.G."/>
            <person name="Bessieres P."/>
            <person name="Bolotin A."/>
            <person name="Borchert S."/>
            <person name="Borriss R."/>
            <person name="Boursier L."/>
            <person name="Brans A."/>
            <person name="Braun M."/>
            <person name="Brignell S.C."/>
            <person name="Bron S."/>
            <person name="Brouillet S."/>
            <person name="Bruschi C.V."/>
            <person name="Caldwell B."/>
            <person name="Capuano V."/>
            <person name="Carter N.M."/>
            <person name="Choi S.-K."/>
            <person name="Codani J.-J."/>
            <person name="Connerton I.F."/>
            <person name="Cummings N.J."/>
            <person name="Daniel R.A."/>
            <person name="Denizot F."/>
            <person name="Devine K.M."/>
            <person name="Duesterhoeft A."/>
            <person name="Ehrlich S.D."/>
            <person name="Emmerson P.T."/>
            <person name="Entian K.-D."/>
            <person name="Errington J."/>
            <person name="Fabret C."/>
            <person name="Ferrari E."/>
            <person name="Foulger D."/>
            <person name="Fritz C."/>
            <person name="Fujita M."/>
            <person name="Fujita Y."/>
            <person name="Fuma S."/>
            <person name="Galizzi A."/>
            <person name="Galleron N."/>
            <person name="Ghim S.-Y."/>
            <person name="Glaser P."/>
            <person name="Goffeau A."/>
            <person name="Golightly E.J."/>
            <person name="Grandi G."/>
            <person name="Guiseppi G."/>
            <person name="Guy B.J."/>
            <person name="Haga K."/>
            <person name="Haiech J."/>
            <person name="Harwood C.R."/>
            <person name="Henaut A."/>
            <person name="Hilbert H."/>
            <person name="Holsappel S."/>
            <person name="Hosono S."/>
            <person name="Hullo M.-F."/>
            <person name="Itaya M."/>
            <person name="Jones L.-M."/>
            <person name="Joris B."/>
            <person name="Karamata D."/>
            <person name="Kasahara Y."/>
            <person name="Klaerr-Blanchard M."/>
            <person name="Klein C."/>
            <person name="Kobayashi Y."/>
            <person name="Koetter P."/>
            <person name="Koningstein G."/>
            <person name="Krogh S."/>
            <person name="Kumano M."/>
            <person name="Kurita K."/>
            <person name="Lapidus A."/>
            <person name="Lardinois S."/>
            <person name="Lauber J."/>
            <person name="Lazarevic V."/>
            <person name="Lee S.-M."/>
            <person name="Levine A."/>
            <person name="Liu H."/>
            <person name="Masuda S."/>
            <person name="Mauel C."/>
            <person name="Medigue C."/>
            <person name="Medina N."/>
            <person name="Mellado R.P."/>
            <person name="Mizuno M."/>
            <person name="Moestl D."/>
            <person name="Nakai S."/>
            <person name="Noback M."/>
            <person name="Noone D."/>
            <person name="O'Reilly M."/>
            <person name="Ogawa K."/>
            <person name="Ogiwara A."/>
            <person name="Oudega B."/>
            <person name="Park S.-H."/>
            <person name="Parro V."/>
            <person name="Pohl T.M."/>
            <person name="Portetelle D."/>
            <person name="Porwollik S."/>
            <person name="Prescott A.M."/>
            <person name="Presecan E."/>
            <person name="Pujic P."/>
            <person name="Purnelle B."/>
            <person name="Rapoport G."/>
            <person name="Rey M."/>
            <person name="Reynolds S."/>
            <person name="Rieger M."/>
            <person name="Rivolta C."/>
            <person name="Rocha E."/>
            <person name="Roche B."/>
            <person name="Rose M."/>
            <person name="Sadaie Y."/>
            <person name="Sato T."/>
            <person name="Scanlan E."/>
            <person name="Schleich S."/>
            <person name="Schroeter R."/>
            <person name="Scoffone F."/>
            <person name="Sekiguchi J."/>
            <person name="Sekowska A."/>
            <person name="Seror S.J."/>
            <person name="Serror P."/>
            <person name="Shin B.-S."/>
            <person name="Soldo B."/>
            <person name="Sorokin A."/>
            <person name="Tacconi E."/>
            <person name="Takagi T."/>
            <person name="Takahashi H."/>
            <person name="Takemaru K."/>
            <person name="Takeuchi M."/>
            <person name="Tamakoshi A."/>
            <person name="Tanaka T."/>
            <person name="Terpstra P."/>
            <person name="Tognoni A."/>
            <person name="Tosato V."/>
            <person name="Uchiyama S."/>
            <person name="Vandenbol M."/>
            <person name="Vannier F."/>
            <person name="Vassarotti A."/>
            <person name="Viari A."/>
            <person name="Wambutt R."/>
            <person name="Wedler E."/>
            <person name="Wedler H."/>
            <person name="Weitzenegger T."/>
            <person name="Winters P."/>
            <person name="Wipat A."/>
            <person name="Yamamoto H."/>
            <person name="Yamane K."/>
            <person name="Yasumoto K."/>
            <person name="Yata K."/>
            <person name="Yoshida K."/>
            <person name="Yoshikawa H.-F."/>
            <person name="Zumstein E."/>
            <person name="Yoshikawa H."/>
            <person name="Danchin A."/>
        </authorList>
    </citation>
    <scope>NUCLEOTIDE SEQUENCE [LARGE SCALE GENOMIC DNA]</scope>
    <source>
        <strain>168</strain>
    </source>
</reference>
<reference key="3">
    <citation type="journal article" date="2009" name="Microbiology">
        <title>From a consortium sequence to a unified sequence: the Bacillus subtilis 168 reference genome a decade later.</title>
        <authorList>
            <person name="Barbe V."/>
            <person name="Cruveiller S."/>
            <person name="Kunst F."/>
            <person name="Lenoble P."/>
            <person name="Meurice G."/>
            <person name="Sekowska A."/>
            <person name="Vallenet D."/>
            <person name="Wang T."/>
            <person name="Moszer I."/>
            <person name="Medigue C."/>
            <person name="Danchin A."/>
        </authorList>
    </citation>
    <scope>SEQUENCE REVISION TO 351</scope>
</reference>
<reference key="4">
    <citation type="journal article" date="1996" name="Microbiology">
        <title>The 52 degrees-55 degrees segment of the Bacillus subtilis chromosome: a region devoted to purine uptake and metabolism, and containing the genes cotA, gabP and guaA and the pur gene cluster within a 34960 bp nucleotide sequence.</title>
        <authorList>
            <person name="Borriss R."/>
            <person name="Porwollik S."/>
            <person name="Schroeter R."/>
        </authorList>
    </citation>
    <scope>NUCLEOTIDE SEQUENCE [GENOMIC DNA] OF 432-512</scope>
    <source>
        <strain>168</strain>
    </source>
</reference>
<protein>
    <recommendedName>
        <fullName evidence="1">Bifunctional purine biosynthesis protein PurH</fullName>
    </recommendedName>
    <domain>
        <recommendedName>
            <fullName evidence="1">Phosphoribosylaminoimidazolecarboxamide formyltransferase</fullName>
            <ecNumber evidence="1">2.1.2.3</ecNumber>
        </recommendedName>
        <alternativeName>
            <fullName evidence="1">AICAR transformylase</fullName>
        </alternativeName>
    </domain>
    <domain>
        <recommendedName>
            <fullName evidence="1">IMP cyclohydrolase</fullName>
            <ecNumber evidence="1">3.5.4.10</ecNumber>
        </recommendedName>
        <alternativeName>
            <fullName evidence="1">ATIC</fullName>
        </alternativeName>
        <alternativeName>
            <fullName evidence="1">IMP synthase</fullName>
        </alternativeName>
        <alternativeName>
            <fullName evidence="1">Inosinicase</fullName>
        </alternativeName>
    </domain>
</protein>
<proteinExistence type="inferred from homology"/>
<name>PUR9_BACSU</name>
<evidence type="ECO:0000255" key="1">
    <source>
        <dbReference type="HAMAP-Rule" id="MF_00139"/>
    </source>
</evidence>
<evidence type="ECO:0000255" key="2">
    <source>
        <dbReference type="PROSITE-ProRule" id="PRU01202"/>
    </source>
</evidence>
<evidence type="ECO:0000305" key="3"/>
<dbReference type="EC" id="2.1.2.3" evidence="1"/>
<dbReference type="EC" id="3.5.4.10" evidence="1"/>
<dbReference type="EMBL" id="J02732">
    <property type="protein sequence ID" value="AAA22683.1"/>
    <property type="molecule type" value="Genomic_DNA"/>
</dbReference>
<dbReference type="EMBL" id="AL009126">
    <property type="protein sequence ID" value="CAB12472.2"/>
    <property type="molecule type" value="Genomic_DNA"/>
</dbReference>
<dbReference type="EMBL" id="AF011544">
    <property type="protein sequence ID" value="AAB72185.1"/>
    <property type="molecule type" value="Genomic_DNA"/>
</dbReference>
<dbReference type="PIR" id="A29183">
    <property type="entry name" value="DTBSPH"/>
</dbReference>
<dbReference type="RefSeq" id="NP_388534.2">
    <property type="nucleotide sequence ID" value="NC_000964.3"/>
</dbReference>
<dbReference type="RefSeq" id="WP_003244516.1">
    <property type="nucleotide sequence ID" value="NZ_OZ025638.1"/>
</dbReference>
<dbReference type="SMR" id="P12048"/>
<dbReference type="FunCoup" id="P12048">
    <property type="interactions" value="701"/>
</dbReference>
<dbReference type="IntAct" id="P12048">
    <property type="interactions" value="1"/>
</dbReference>
<dbReference type="MINT" id="P12048"/>
<dbReference type="STRING" id="224308.BSU06520"/>
<dbReference type="PaxDb" id="224308-BSU06520"/>
<dbReference type="EnsemblBacteria" id="CAB12472">
    <property type="protein sequence ID" value="CAB12472"/>
    <property type="gene ID" value="BSU_06520"/>
</dbReference>
<dbReference type="GeneID" id="936053"/>
<dbReference type="KEGG" id="bsu:BSU06520"/>
<dbReference type="PATRIC" id="fig|224308.179.peg.708"/>
<dbReference type="eggNOG" id="COG0138">
    <property type="taxonomic scope" value="Bacteria"/>
</dbReference>
<dbReference type="InParanoid" id="P12048"/>
<dbReference type="OrthoDB" id="9802065at2"/>
<dbReference type="PhylomeDB" id="P12048"/>
<dbReference type="BioCyc" id="BSUB:BSU06520-MONOMER"/>
<dbReference type="UniPathway" id="UPA00074">
    <property type="reaction ID" value="UER00133"/>
</dbReference>
<dbReference type="UniPathway" id="UPA00074">
    <property type="reaction ID" value="UER00135"/>
</dbReference>
<dbReference type="Proteomes" id="UP000001570">
    <property type="component" value="Chromosome"/>
</dbReference>
<dbReference type="GO" id="GO:0005829">
    <property type="term" value="C:cytosol"/>
    <property type="evidence" value="ECO:0000318"/>
    <property type="project" value="GO_Central"/>
</dbReference>
<dbReference type="GO" id="GO:0003937">
    <property type="term" value="F:IMP cyclohydrolase activity"/>
    <property type="evidence" value="ECO:0000318"/>
    <property type="project" value="GO_Central"/>
</dbReference>
<dbReference type="GO" id="GO:0004643">
    <property type="term" value="F:phosphoribosylaminoimidazolecarboxamide formyltransferase activity"/>
    <property type="evidence" value="ECO:0000318"/>
    <property type="project" value="GO_Central"/>
</dbReference>
<dbReference type="GO" id="GO:0006189">
    <property type="term" value="P:'de novo' IMP biosynthetic process"/>
    <property type="evidence" value="ECO:0000318"/>
    <property type="project" value="GO_Central"/>
</dbReference>
<dbReference type="CDD" id="cd01421">
    <property type="entry name" value="IMPCH"/>
    <property type="match status" value="1"/>
</dbReference>
<dbReference type="FunFam" id="3.40.140.20:FF:000001">
    <property type="entry name" value="Bifunctional purine biosynthesis protein PurH"/>
    <property type="match status" value="1"/>
</dbReference>
<dbReference type="FunFam" id="3.40.140.20:FF:000002">
    <property type="entry name" value="Bifunctional purine biosynthesis protein PurH"/>
    <property type="match status" value="1"/>
</dbReference>
<dbReference type="FunFam" id="3.40.50.1380:FF:000001">
    <property type="entry name" value="Bifunctional purine biosynthesis protein PurH"/>
    <property type="match status" value="1"/>
</dbReference>
<dbReference type="Gene3D" id="3.40.140.20">
    <property type="match status" value="2"/>
</dbReference>
<dbReference type="Gene3D" id="3.40.50.1380">
    <property type="entry name" value="Methylglyoxal synthase-like domain"/>
    <property type="match status" value="1"/>
</dbReference>
<dbReference type="HAMAP" id="MF_00139">
    <property type="entry name" value="PurH"/>
    <property type="match status" value="1"/>
</dbReference>
<dbReference type="InterPro" id="IPR024051">
    <property type="entry name" value="AICAR_Tfase_dup_dom_sf"/>
</dbReference>
<dbReference type="InterPro" id="IPR016193">
    <property type="entry name" value="Cytidine_deaminase-like"/>
</dbReference>
<dbReference type="InterPro" id="IPR011607">
    <property type="entry name" value="MGS-like_dom"/>
</dbReference>
<dbReference type="InterPro" id="IPR036914">
    <property type="entry name" value="MGS-like_dom_sf"/>
</dbReference>
<dbReference type="InterPro" id="IPR002695">
    <property type="entry name" value="PurH-like"/>
</dbReference>
<dbReference type="NCBIfam" id="NF002049">
    <property type="entry name" value="PRK00881.1"/>
    <property type="match status" value="1"/>
</dbReference>
<dbReference type="NCBIfam" id="TIGR00355">
    <property type="entry name" value="purH"/>
    <property type="match status" value="1"/>
</dbReference>
<dbReference type="PANTHER" id="PTHR11692:SF0">
    <property type="entry name" value="BIFUNCTIONAL PURINE BIOSYNTHESIS PROTEIN ATIC"/>
    <property type="match status" value="1"/>
</dbReference>
<dbReference type="PANTHER" id="PTHR11692">
    <property type="entry name" value="BIFUNCTIONAL PURINE BIOSYNTHESIS PROTEIN PURH"/>
    <property type="match status" value="1"/>
</dbReference>
<dbReference type="Pfam" id="PF01808">
    <property type="entry name" value="AICARFT_IMPCHas"/>
    <property type="match status" value="1"/>
</dbReference>
<dbReference type="Pfam" id="PF02142">
    <property type="entry name" value="MGS"/>
    <property type="match status" value="1"/>
</dbReference>
<dbReference type="PIRSF" id="PIRSF000414">
    <property type="entry name" value="AICARFT_IMPCHas"/>
    <property type="match status" value="1"/>
</dbReference>
<dbReference type="SMART" id="SM00798">
    <property type="entry name" value="AICARFT_IMPCHas"/>
    <property type="match status" value="1"/>
</dbReference>
<dbReference type="SMART" id="SM00851">
    <property type="entry name" value="MGS"/>
    <property type="match status" value="1"/>
</dbReference>
<dbReference type="SUPFAM" id="SSF53927">
    <property type="entry name" value="Cytidine deaminase-like"/>
    <property type="match status" value="1"/>
</dbReference>
<dbReference type="SUPFAM" id="SSF52335">
    <property type="entry name" value="Methylglyoxal synthase-like"/>
    <property type="match status" value="1"/>
</dbReference>
<dbReference type="PROSITE" id="PS51855">
    <property type="entry name" value="MGS"/>
    <property type="match status" value="1"/>
</dbReference>